<reference key="1">
    <citation type="journal article" date="2013" name="Plant Physiol.">
        <title>A Nostoc punctiforme Sugar Transporter Necessary to Establish a Cyanobacterium-Plant Symbiosis.</title>
        <authorList>
            <person name="Ekman M."/>
            <person name="Picossi S."/>
            <person name="Campbell E.L."/>
            <person name="Meeks J.C."/>
            <person name="Flores E."/>
        </authorList>
    </citation>
    <scope>NUCLEOTIDE SEQUENCE [LARGE SCALE GENOMIC DNA]</scope>
    <source>
        <strain>ATCC 29133 / PCC 73102</strain>
    </source>
</reference>
<gene>
    <name evidence="1" type="primary">rpsG</name>
    <name evidence="1" type="synonym">rps7</name>
    <name type="ordered locus">Npun_F3882</name>
</gene>
<organism>
    <name type="scientific">Nostoc punctiforme (strain ATCC 29133 / PCC 73102)</name>
    <dbReference type="NCBI Taxonomy" id="63737"/>
    <lineage>
        <taxon>Bacteria</taxon>
        <taxon>Bacillati</taxon>
        <taxon>Cyanobacteriota</taxon>
        <taxon>Cyanophyceae</taxon>
        <taxon>Nostocales</taxon>
        <taxon>Nostocaceae</taxon>
        <taxon>Nostoc</taxon>
    </lineage>
</organism>
<dbReference type="EMBL" id="CP001037">
    <property type="protein sequence ID" value="ACC82266.1"/>
    <property type="molecule type" value="Genomic_DNA"/>
</dbReference>
<dbReference type="RefSeq" id="WP_012410237.1">
    <property type="nucleotide sequence ID" value="NC_010628.1"/>
</dbReference>
<dbReference type="SMR" id="B2J5A9"/>
<dbReference type="STRING" id="63737.Npun_F3882"/>
<dbReference type="EnsemblBacteria" id="ACC82266">
    <property type="protein sequence ID" value="ACC82266"/>
    <property type="gene ID" value="Npun_F3882"/>
</dbReference>
<dbReference type="KEGG" id="npu:Npun_F3882"/>
<dbReference type="eggNOG" id="COG0049">
    <property type="taxonomic scope" value="Bacteria"/>
</dbReference>
<dbReference type="HOGENOM" id="CLU_072226_1_1_3"/>
<dbReference type="OrthoDB" id="9807653at2"/>
<dbReference type="PhylomeDB" id="B2J5A9"/>
<dbReference type="Proteomes" id="UP000001191">
    <property type="component" value="Chromosome"/>
</dbReference>
<dbReference type="GO" id="GO:0015935">
    <property type="term" value="C:small ribosomal subunit"/>
    <property type="evidence" value="ECO:0007669"/>
    <property type="project" value="InterPro"/>
</dbReference>
<dbReference type="GO" id="GO:0019843">
    <property type="term" value="F:rRNA binding"/>
    <property type="evidence" value="ECO:0007669"/>
    <property type="project" value="UniProtKB-UniRule"/>
</dbReference>
<dbReference type="GO" id="GO:0003735">
    <property type="term" value="F:structural constituent of ribosome"/>
    <property type="evidence" value="ECO:0007669"/>
    <property type="project" value="InterPro"/>
</dbReference>
<dbReference type="GO" id="GO:0000049">
    <property type="term" value="F:tRNA binding"/>
    <property type="evidence" value="ECO:0007669"/>
    <property type="project" value="UniProtKB-UniRule"/>
</dbReference>
<dbReference type="GO" id="GO:0006412">
    <property type="term" value="P:translation"/>
    <property type="evidence" value="ECO:0007669"/>
    <property type="project" value="UniProtKB-UniRule"/>
</dbReference>
<dbReference type="CDD" id="cd14871">
    <property type="entry name" value="uS7_Chloroplast"/>
    <property type="match status" value="1"/>
</dbReference>
<dbReference type="FunFam" id="1.10.455.10:FF:000001">
    <property type="entry name" value="30S ribosomal protein S7"/>
    <property type="match status" value="1"/>
</dbReference>
<dbReference type="Gene3D" id="1.10.455.10">
    <property type="entry name" value="Ribosomal protein S7 domain"/>
    <property type="match status" value="1"/>
</dbReference>
<dbReference type="HAMAP" id="MF_00480_B">
    <property type="entry name" value="Ribosomal_uS7_B"/>
    <property type="match status" value="1"/>
</dbReference>
<dbReference type="InterPro" id="IPR000235">
    <property type="entry name" value="Ribosomal_uS7"/>
</dbReference>
<dbReference type="InterPro" id="IPR005717">
    <property type="entry name" value="Ribosomal_uS7_bac/org-type"/>
</dbReference>
<dbReference type="InterPro" id="IPR020606">
    <property type="entry name" value="Ribosomal_uS7_CS"/>
</dbReference>
<dbReference type="InterPro" id="IPR023798">
    <property type="entry name" value="Ribosomal_uS7_dom"/>
</dbReference>
<dbReference type="InterPro" id="IPR036823">
    <property type="entry name" value="Ribosomal_uS7_dom_sf"/>
</dbReference>
<dbReference type="NCBIfam" id="TIGR01029">
    <property type="entry name" value="rpsG_bact"/>
    <property type="match status" value="1"/>
</dbReference>
<dbReference type="PANTHER" id="PTHR11205">
    <property type="entry name" value="RIBOSOMAL PROTEIN S7"/>
    <property type="match status" value="1"/>
</dbReference>
<dbReference type="Pfam" id="PF00177">
    <property type="entry name" value="Ribosomal_S7"/>
    <property type="match status" value="1"/>
</dbReference>
<dbReference type="PIRSF" id="PIRSF002122">
    <property type="entry name" value="RPS7p_RPS7a_RPS5e_RPS7o"/>
    <property type="match status" value="1"/>
</dbReference>
<dbReference type="SUPFAM" id="SSF47973">
    <property type="entry name" value="Ribosomal protein S7"/>
    <property type="match status" value="1"/>
</dbReference>
<dbReference type="PROSITE" id="PS00052">
    <property type="entry name" value="RIBOSOMAL_S7"/>
    <property type="match status" value="1"/>
</dbReference>
<protein>
    <recommendedName>
        <fullName evidence="1">Small ribosomal subunit protein uS7</fullName>
    </recommendedName>
    <alternativeName>
        <fullName evidence="2">30S ribosomal protein S7</fullName>
    </alternativeName>
</protein>
<name>RS7_NOSP7</name>
<keyword id="KW-1185">Reference proteome</keyword>
<keyword id="KW-0687">Ribonucleoprotein</keyword>
<keyword id="KW-0689">Ribosomal protein</keyword>
<keyword id="KW-0694">RNA-binding</keyword>
<keyword id="KW-0699">rRNA-binding</keyword>
<keyword id="KW-0820">tRNA-binding</keyword>
<evidence type="ECO:0000255" key="1">
    <source>
        <dbReference type="HAMAP-Rule" id="MF_00480"/>
    </source>
</evidence>
<evidence type="ECO:0000305" key="2"/>
<proteinExistence type="inferred from homology"/>
<accession>B2J5A9</accession>
<comment type="function">
    <text evidence="1">One of the primary rRNA binding proteins, it binds directly to 16S rRNA where it nucleates assembly of the head domain of the 30S subunit. Is located at the subunit interface close to the decoding center, probably blocks exit of the E-site tRNA.</text>
</comment>
<comment type="subunit">
    <text evidence="1">Part of the 30S ribosomal subunit. Contacts proteins S9 and S11.</text>
</comment>
<comment type="similarity">
    <text evidence="1">Belongs to the universal ribosomal protein uS7 family.</text>
</comment>
<sequence length="156" mass="17819">MSRRGVIQRRPVPSDSVYNSRLVSMIIRRIMRHGKKSLAARIVYEALKTIEERTGNGALETFERAVRNATPLVEVKARRVGGATYQVPMEVRSERGTTLALRWLVQYSRSRPGRTMASKLANELMDAANETGNAIRKREETHRMAEANKAFAHYRY</sequence>
<feature type="chain" id="PRO_1000125975" description="Small ribosomal subunit protein uS7">
    <location>
        <begin position="1"/>
        <end position="156"/>
    </location>
</feature>